<accession>Q74JK7</accession>
<protein>
    <recommendedName>
        <fullName evidence="1">CCA-adding enzyme</fullName>
        <ecNumber evidence="1">2.7.7.72</ecNumber>
    </recommendedName>
    <alternativeName>
        <fullName evidence="1">CCA tRNA nucleotidyltransferase</fullName>
    </alternativeName>
    <alternativeName>
        <fullName evidence="1">tRNA CCA-pyrophosphorylase</fullName>
    </alternativeName>
    <alternativeName>
        <fullName evidence="1">tRNA adenylyl-/cytidylyl- transferase</fullName>
    </alternativeName>
    <alternativeName>
        <fullName evidence="1">tRNA nucleotidyltransferase</fullName>
    </alternativeName>
    <alternativeName>
        <fullName evidence="1">tRNA-NT</fullName>
    </alternativeName>
</protein>
<feature type="chain" id="PRO_0000139038" description="CCA-adding enzyme">
    <location>
        <begin position="1"/>
        <end position="398"/>
    </location>
</feature>
<feature type="binding site" evidence="1">
    <location>
        <position position="32"/>
    </location>
    <ligand>
        <name>ATP</name>
        <dbReference type="ChEBI" id="CHEBI:30616"/>
    </ligand>
</feature>
<feature type="binding site" evidence="1">
    <location>
        <position position="32"/>
    </location>
    <ligand>
        <name>CTP</name>
        <dbReference type="ChEBI" id="CHEBI:37563"/>
    </ligand>
</feature>
<feature type="binding site" evidence="1">
    <location>
        <position position="35"/>
    </location>
    <ligand>
        <name>ATP</name>
        <dbReference type="ChEBI" id="CHEBI:30616"/>
    </ligand>
</feature>
<feature type="binding site" evidence="1">
    <location>
        <position position="35"/>
    </location>
    <ligand>
        <name>CTP</name>
        <dbReference type="ChEBI" id="CHEBI:37563"/>
    </ligand>
</feature>
<feature type="binding site" evidence="1">
    <location>
        <position position="45"/>
    </location>
    <ligand>
        <name>Mg(2+)</name>
        <dbReference type="ChEBI" id="CHEBI:18420"/>
    </ligand>
</feature>
<feature type="binding site" evidence="1">
    <location>
        <position position="47"/>
    </location>
    <ligand>
        <name>Mg(2+)</name>
        <dbReference type="ChEBI" id="CHEBI:18420"/>
    </ligand>
</feature>
<feature type="binding site" evidence="1">
    <location>
        <position position="116"/>
    </location>
    <ligand>
        <name>ATP</name>
        <dbReference type="ChEBI" id="CHEBI:30616"/>
    </ligand>
</feature>
<feature type="binding site" evidence="1">
    <location>
        <position position="116"/>
    </location>
    <ligand>
        <name>CTP</name>
        <dbReference type="ChEBI" id="CHEBI:37563"/>
    </ligand>
</feature>
<feature type="binding site" evidence="1">
    <location>
        <position position="159"/>
    </location>
    <ligand>
        <name>ATP</name>
        <dbReference type="ChEBI" id="CHEBI:30616"/>
    </ligand>
</feature>
<feature type="binding site" evidence="1">
    <location>
        <position position="159"/>
    </location>
    <ligand>
        <name>CTP</name>
        <dbReference type="ChEBI" id="CHEBI:37563"/>
    </ligand>
</feature>
<feature type="binding site" evidence="1">
    <location>
        <position position="162"/>
    </location>
    <ligand>
        <name>ATP</name>
        <dbReference type="ChEBI" id="CHEBI:30616"/>
    </ligand>
</feature>
<feature type="binding site" evidence="1">
    <location>
        <position position="162"/>
    </location>
    <ligand>
        <name>CTP</name>
        <dbReference type="ChEBI" id="CHEBI:37563"/>
    </ligand>
</feature>
<feature type="binding site" evidence="1">
    <location>
        <position position="165"/>
    </location>
    <ligand>
        <name>ATP</name>
        <dbReference type="ChEBI" id="CHEBI:30616"/>
    </ligand>
</feature>
<feature type="binding site" evidence="1">
    <location>
        <position position="165"/>
    </location>
    <ligand>
        <name>CTP</name>
        <dbReference type="ChEBI" id="CHEBI:37563"/>
    </ligand>
</feature>
<feature type="binding site" evidence="1">
    <location>
        <position position="168"/>
    </location>
    <ligand>
        <name>ATP</name>
        <dbReference type="ChEBI" id="CHEBI:30616"/>
    </ligand>
</feature>
<feature type="binding site" evidence="1">
    <location>
        <position position="168"/>
    </location>
    <ligand>
        <name>CTP</name>
        <dbReference type="ChEBI" id="CHEBI:37563"/>
    </ligand>
</feature>
<keyword id="KW-0067">ATP-binding</keyword>
<keyword id="KW-0460">Magnesium</keyword>
<keyword id="KW-0479">Metal-binding</keyword>
<keyword id="KW-0547">Nucleotide-binding</keyword>
<keyword id="KW-0548">Nucleotidyltransferase</keyword>
<keyword id="KW-0692">RNA repair</keyword>
<keyword id="KW-0694">RNA-binding</keyword>
<keyword id="KW-0808">Transferase</keyword>
<keyword id="KW-0819">tRNA processing</keyword>
<comment type="function">
    <text evidence="1">Catalyzes the addition and repair of the essential 3'-terminal CCA sequence in tRNAs without using a nucleic acid template. Adds these three nucleotides in the order of C, C, and A to the tRNA nucleotide-73, using CTP and ATP as substrates and producing inorganic pyrophosphate. tRNA 3'-terminal CCA addition is required both for tRNA processing and repair. Also involved in tRNA surveillance by mediating tandem CCA addition to generate a CCACCA at the 3' terminus of unstable tRNAs. While stable tRNAs receive only 3'-terminal CCA, unstable tRNAs are marked with CCACCA and rapidly degraded.</text>
</comment>
<comment type="catalytic activity">
    <reaction evidence="1">
        <text>a tRNA precursor + 2 CTP + ATP = a tRNA with a 3' CCA end + 3 diphosphate</text>
        <dbReference type="Rhea" id="RHEA:14433"/>
        <dbReference type="Rhea" id="RHEA-COMP:10465"/>
        <dbReference type="Rhea" id="RHEA-COMP:10468"/>
        <dbReference type="ChEBI" id="CHEBI:30616"/>
        <dbReference type="ChEBI" id="CHEBI:33019"/>
        <dbReference type="ChEBI" id="CHEBI:37563"/>
        <dbReference type="ChEBI" id="CHEBI:74896"/>
        <dbReference type="ChEBI" id="CHEBI:83071"/>
        <dbReference type="EC" id="2.7.7.72"/>
    </reaction>
</comment>
<comment type="catalytic activity">
    <reaction evidence="1">
        <text>a tRNA with a 3' CCA end + 2 CTP + ATP = a tRNA with a 3' CCACCA end + 3 diphosphate</text>
        <dbReference type="Rhea" id="RHEA:76235"/>
        <dbReference type="Rhea" id="RHEA-COMP:10468"/>
        <dbReference type="Rhea" id="RHEA-COMP:18655"/>
        <dbReference type="ChEBI" id="CHEBI:30616"/>
        <dbReference type="ChEBI" id="CHEBI:33019"/>
        <dbReference type="ChEBI" id="CHEBI:37563"/>
        <dbReference type="ChEBI" id="CHEBI:83071"/>
        <dbReference type="ChEBI" id="CHEBI:195187"/>
    </reaction>
    <physiologicalReaction direction="left-to-right" evidence="1">
        <dbReference type="Rhea" id="RHEA:76236"/>
    </physiologicalReaction>
</comment>
<comment type="cofactor">
    <cofactor evidence="1">
        <name>Mg(2+)</name>
        <dbReference type="ChEBI" id="CHEBI:18420"/>
    </cofactor>
</comment>
<comment type="subunit">
    <text evidence="1">Homodimer.</text>
</comment>
<comment type="miscellaneous">
    <text evidence="1">A single active site specifically recognizes both ATP and CTP and is responsible for their addition.</text>
</comment>
<comment type="similarity">
    <text evidence="1">Belongs to the tRNA nucleotidyltransferase/poly(A) polymerase family. Bacterial CCA-adding enzyme type 3 subfamily.</text>
</comment>
<name>CCA_LACJO</name>
<dbReference type="EC" id="2.7.7.72" evidence="1"/>
<dbReference type="EMBL" id="AE017198">
    <property type="protein sequence ID" value="AAS08922.1"/>
    <property type="molecule type" value="Genomic_DNA"/>
</dbReference>
<dbReference type="RefSeq" id="WP_011161941.1">
    <property type="nucleotide sequence ID" value="NC_005362.1"/>
</dbReference>
<dbReference type="SMR" id="Q74JK7"/>
<dbReference type="KEGG" id="ljo:LJ_1100"/>
<dbReference type="PATRIC" id="fig|257314.6.peg.961"/>
<dbReference type="eggNOG" id="COG0617">
    <property type="taxonomic scope" value="Bacteria"/>
</dbReference>
<dbReference type="HOGENOM" id="CLU_015961_3_0_9"/>
<dbReference type="Proteomes" id="UP000000581">
    <property type="component" value="Chromosome"/>
</dbReference>
<dbReference type="GO" id="GO:0005524">
    <property type="term" value="F:ATP binding"/>
    <property type="evidence" value="ECO:0007669"/>
    <property type="project" value="UniProtKB-UniRule"/>
</dbReference>
<dbReference type="GO" id="GO:0004810">
    <property type="term" value="F:CCA tRNA nucleotidyltransferase activity"/>
    <property type="evidence" value="ECO:0007669"/>
    <property type="project" value="UniProtKB-UniRule"/>
</dbReference>
<dbReference type="GO" id="GO:0000287">
    <property type="term" value="F:magnesium ion binding"/>
    <property type="evidence" value="ECO:0007669"/>
    <property type="project" value="UniProtKB-UniRule"/>
</dbReference>
<dbReference type="GO" id="GO:0000049">
    <property type="term" value="F:tRNA binding"/>
    <property type="evidence" value="ECO:0007669"/>
    <property type="project" value="UniProtKB-UniRule"/>
</dbReference>
<dbReference type="GO" id="GO:0042245">
    <property type="term" value="P:RNA repair"/>
    <property type="evidence" value="ECO:0007669"/>
    <property type="project" value="UniProtKB-KW"/>
</dbReference>
<dbReference type="GO" id="GO:0001680">
    <property type="term" value="P:tRNA 3'-terminal CCA addition"/>
    <property type="evidence" value="ECO:0007669"/>
    <property type="project" value="UniProtKB-UniRule"/>
</dbReference>
<dbReference type="CDD" id="cd05398">
    <property type="entry name" value="NT_ClassII-CCAase"/>
    <property type="match status" value="1"/>
</dbReference>
<dbReference type="Gene3D" id="1.10.110.30">
    <property type="match status" value="1"/>
</dbReference>
<dbReference type="Gene3D" id="1.10.246.80">
    <property type="match status" value="1"/>
</dbReference>
<dbReference type="Gene3D" id="1.20.58.560">
    <property type="match status" value="1"/>
</dbReference>
<dbReference type="Gene3D" id="3.30.460.10">
    <property type="entry name" value="Beta Polymerase, domain 2"/>
    <property type="match status" value="1"/>
</dbReference>
<dbReference type="HAMAP" id="MF_01263">
    <property type="entry name" value="CCA_bact_type3"/>
    <property type="match status" value="1"/>
</dbReference>
<dbReference type="InterPro" id="IPR050264">
    <property type="entry name" value="Bact_CCA-adding_enz_type3_sf"/>
</dbReference>
<dbReference type="InterPro" id="IPR032810">
    <property type="entry name" value="CCA-adding_enz_C"/>
</dbReference>
<dbReference type="InterPro" id="IPR023068">
    <property type="entry name" value="CCA-adding_enz_firmicutes"/>
</dbReference>
<dbReference type="InterPro" id="IPR043519">
    <property type="entry name" value="NT_sf"/>
</dbReference>
<dbReference type="InterPro" id="IPR002646">
    <property type="entry name" value="PolA_pol_head_dom"/>
</dbReference>
<dbReference type="InterPro" id="IPR032828">
    <property type="entry name" value="PolyA_RNA-bd"/>
</dbReference>
<dbReference type="NCBIfam" id="NF009814">
    <property type="entry name" value="PRK13299.1"/>
    <property type="match status" value="1"/>
</dbReference>
<dbReference type="PANTHER" id="PTHR46173">
    <property type="entry name" value="CCA TRNA NUCLEOTIDYLTRANSFERASE 1, MITOCHONDRIAL"/>
    <property type="match status" value="1"/>
</dbReference>
<dbReference type="PANTHER" id="PTHR46173:SF1">
    <property type="entry name" value="CCA TRNA NUCLEOTIDYLTRANSFERASE 1, MITOCHONDRIAL"/>
    <property type="match status" value="1"/>
</dbReference>
<dbReference type="Pfam" id="PF01743">
    <property type="entry name" value="PolyA_pol"/>
    <property type="match status" value="1"/>
</dbReference>
<dbReference type="Pfam" id="PF12627">
    <property type="entry name" value="PolyA_pol_RNAbd"/>
    <property type="match status" value="1"/>
</dbReference>
<dbReference type="Pfam" id="PF13735">
    <property type="entry name" value="tRNA_NucTran2_2"/>
    <property type="match status" value="1"/>
</dbReference>
<dbReference type="SUPFAM" id="SSF81301">
    <property type="entry name" value="Nucleotidyltransferase"/>
    <property type="match status" value="1"/>
</dbReference>
<dbReference type="SUPFAM" id="SSF81891">
    <property type="entry name" value="Poly A polymerase C-terminal region-like"/>
    <property type="match status" value="1"/>
</dbReference>
<evidence type="ECO:0000255" key="1">
    <source>
        <dbReference type="HAMAP-Rule" id="MF_01263"/>
    </source>
</evidence>
<proteinExistence type="inferred from homology"/>
<reference key="1">
    <citation type="journal article" date="2004" name="Proc. Natl. Acad. Sci. U.S.A.">
        <title>The genome sequence of the probiotic intestinal bacterium Lactobacillus johnsonii NCC 533.</title>
        <authorList>
            <person name="Pridmore R.D."/>
            <person name="Berger B."/>
            <person name="Desiere F."/>
            <person name="Vilanova D."/>
            <person name="Barretto C."/>
            <person name="Pittet A.-C."/>
            <person name="Zwahlen M.-C."/>
            <person name="Rouvet M."/>
            <person name="Altermann E."/>
            <person name="Barrangou R."/>
            <person name="Mollet B."/>
            <person name="Mercenier A."/>
            <person name="Klaenhammer T."/>
            <person name="Arigoni F."/>
            <person name="Schell M.A."/>
        </authorList>
    </citation>
    <scope>NUCLEOTIDE SEQUENCE [LARGE SCALE GENOMIC DNA]</scope>
    <source>
        <strain>CNCM I-1225 / La1 / NCC 533</strain>
    </source>
</reference>
<organism>
    <name type="scientific">Lactobacillus johnsonii (strain CNCM I-12250 / La1 / NCC 533)</name>
    <dbReference type="NCBI Taxonomy" id="257314"/>
    <lineage>
        <taxon>Bacteria</taxon>
        <taxon>Bacillati</taxon>
        <taxon>Bacillota</taxon>
        <taxon>Bacilli</taxon>
        <taxon>Lactobacillales</taxon>
        <taxon>Lactobacillaceae</taxon>
        <taxon>Lactobacillus</taxon>
    </lineage>
</organism>
<sequence length="398" mass="44851">MKINNLPEVFTAALPVLKEINEAGYEAYFVGGSVRDLLLNRHIHDVDIATSAYPMEIKQIFKKTIDTGIKHGTVTVLYEGESYEITTFRTESGYQDFRRPDHVTFVQNLSEDLKRRDFTINALAMDVDGNIIDHFDGLGDLEKHLIRAVGKAENRFHEDALRMMRAVRFMSQLQFTLEPETEQAISDNHELLSKISVERIRDEFVKMGIAPGSQKAFQIFLDTGLSEEVPGFRGKKENLALYPQLNFSPTTEANLWALMIILLKLPNDKIPHFMRMWKNSNAMERQVADIVAFFDLISSHAPNNYDLYKAGLETIVSTIDLAHILGQPVNGSALVDSYEALPIKNNRDLVIDGHFLLKNGIPAGPRVGLLLEEIKKAVLEGVISNNEAAITEFISLNH</sequence>
<gene>
    <name evidence="1" type="primary">cca</name>
    <name type="ordered locus">LJ_1100</name>
</gene>